<protein>
    <recommendedName>
        <fullName evidence="5">Nucleoside hydrolase 3</fullName>
    </recommendedName>
    <alternativeName>
        <fullName evidence="5">Adenosine nucleosidase</fullName>
        <ecNumber evidence="3">3.2.2.7</ecNumber>
    </alternativeName>
    <alternativeName>
        <fullName evidence="5">Inosine nucleosidase</fullName>
        <ecNumber evidence="3">3.2.2.2</ecNumber>
    </alternativeName>
    <alternativeName>
        <fullName evidence="5">Purine nucleosidase</fullName>
        <ecNumber evidence="3">3.2.2.1</ecNumber>
    </alternativeName>
</protein>
<organism>
    <name type="scientific">Arabidopsis thaliana</name>
    <name type="common">Mouse-ear cress</name>
    <dbReference type="NCBI Taxonomy" id="3702"/>
    <lineage>
        <taxon>Eukaryota</taxon>
        <taxon>Viridiplantae</taxon>
        <taxon>Streptophyta</taxon>
        <taxon>Embryophyta</taxon>
        <taxon>Tracheophyta</taxon>
        <taxon>Spermatophyta</taxon>
        <taxon>Magnoliopsida</taxon>
        <taxon>eudicotyledons</taxon>
        <taxon>Gunneridae</taxon>
        <taxon>Pentapetalae</taxon>
        <taxon>rosids</taxon>
        <taxon>malvids</taxon>
        <taxon>Brassicales</taxon>
        <taxon>Brassicaceae</taxon>
        <taxon>Camelineae</taxon>
        <taxon>Arabidopsis</taxon>
    </lineage>
</organism>
<keyword id="KW-0052">Apoplast</keyword>
<keyword id="KW-0325">Glycoprotein</keyword>
<keyword id="KW-0378">Hydrolase</keyword>
<keyword id="KW-1185">Reference proteome</keyword>
<keyword id="KW-0964">Secreted</keyword>
<keyword id="KW-0732">Signal</keyword>
<dbReference type="EC" id="3.2.2.7" evidence="3"/>
<dbReference type="EC" id="3.2.2.2" evidence="3"/>
<dbReference type="EC" id="3.2.2.1" evidence="3"/>
<dbReference type="EMBL" id="AC068655">
    <property type="status" value="NOT_ANNOTATED_CDS"/>
    <property type="molecule type" value="Genomic_DNA"/>
</dbReference>
<dbReference type="EMBL" id="CP002688">
    <property type="protein sequence ID" value="AED92622.1"/>
    <property type="molecule type" value="Genomic_DNA"/>
</dbReference>
<dbReference type="EMBL" id="CP002688">
    <property type="protein sequence ID" value="ANM68442.1"/>
    <property type="molecule type" value="Genomic_DNA"/>
</dbReference>
<dbReference type="EMBL" id="AY078950">
    <property type="protein sequence ID" value="AAL84950.1"/>
    <property type="molecule type" value="mRNA"/>
</dbReference>
<dbReference type="EMBL" id="AY133631">
    <property type="protein sequence ID" value="AAM91461.1"/>
    <property type="molecule type" value="mRNA"/>
</dbReference>
<dbReference type="RefSeq" id="NP_001330199.1">
    <property type="nucleotide sequence ID" value="NM_001343573.1"/>
</dbReference>
<dbReference type="RefSeq" id="NP_197387.1">
    <property type="nucleotide sequence ID" value="NM_121891.4"/>
</dbReference>
<dbReference type="SMR" id="Q8RY23"/>
<dbReference type="FunCoup" id="Q8RY23">
    <property type="interactions" value="321"/>
</dbReference>
<dbReference type="STRING" id="3702.Q8RY23"/>
<dbReference type="GlyCosmos" id="Q8RY23">
    <property type="glycosylation" value="7 sites, No reported glycans"/>
</dbReference>
<dbReference type="GlyGen" id="Q8RY23">
    <property type="glycosylation" value="8 sites"/>
</dbReference>
<dbReference type="iPTMnet" id="Q8RY23"/>
<dbReference type="PaxDb" id="3702-AT5G18860.1"/>
<dbReference type="ProteomicsDB" id="181332"/>
<dbReference type="EnsemblPlants" id="AT5G18860.1">
    <property type="protein sequence ID" value="AT5G18860.1"/>
    <property type="gene ID" value="AT5G18860"/>
</dbReference>
<dbReference type="EnsemblPlants" id="AT5G18860.2">
    <property type="protein sequence ID" value="AT5G18860.2"/>
    <property type="gene ID" value="AT5G18860"/>
</dbReference>
<dbReference type="GeneID" id="832004"/>
<dbReference type="Gramene" id="AT5G18860.1">
    <property type="protein sequence ID" value="AT5G18860.1"/>
    <property type="gene ID" value="AT5G18860"/>
</dbReference>
<dbReference type="Gramene" id="AT5G18860.2">
    <property type="protein sequence ID" value="AT5G18860.2"/>
    <property type="gene ID" value="AT5G18860"/>
</dbReference>
<dbReference type="KEGG" id="ath:AT5G18860"/>
<dbReference type="Araport" id="AT5G18860"/>
<dbReference type="TAIR" id="AT5G18860">
    <property type="gene designation" value="NSH3"/>
</dbReference>
<dbReference type="eggNOG" id="KOG2938">
    <property type="taxonomic scope" value="Eukaryota"/>
</dbReference>
<dbReference type="HOGENOM" id="CLU_018945_1_0_1"/>
<dbReference type="InParanoid" id="Q8RY23"/>
<dbReference type="OMA" id="FYTNYFM"/>
<dbReference type="PhylomeDB" id="Q8RY23"/>
<dbReference type="PRO" id="PR:Q8RY23"/>
<dbReference type="Proteomes" id="UP000006548">
    <property type="component" value="Chromosome 5"/>
</dbReference>
<dbReference type="ExpressionAtlas" id="Q8RY23">
    <property type="expression patterns" value="baseline and differential"/>
</dbReference>
<dbReference type="GO" id="GO:0048046">
    <property type="term" value="C:apoplast"/>
    <property type="evidence" value="ECO:0000314"/>
    <property type="project" value="TAIR"/>
</dbReference>
<dbReference type="GO" id="GO:0047622">
    <property type="term" value="F:adenosine nucleosidase activity"/>
    <property type="evidence" value="ECO:0000315"/>
    <property type="project" value="TAIR"/>
</dbReference>
<dbReference type="GO" id="GO:0047724">
    <property type="term" value="F:inosine nucleosidase activity"/>
    <property type="evidence" value="ECO:0000315"/>
    <property type="project" value="TAIR"/>
</dbReference>
<dbReference type="GO" id="GO:0006154">
    <property type="term" value="P:adenosine catabolic process"/>
    <property type="evidence" value="ECO:0000315"/>
    <property type="project" value="TAIR"/>
</dbReference>
<dbReference type="GO" id="GO:0006148">
    <property type="term" value="P:inosine catabolic process"/>
    <property type="evidence" value="ECO:0000315"/>
    <property type="project" value="TAIR"/>
</dbReference>
<dbReference type="GO" id="GO:0009753">
    <property type="term" value="P:response to jasmonic acid"/>
    <property type="evidence" value="ECO:0000270"/>
    <property type="project" value="TAIR"/>
</dbReference>
<dbReference type="GO" id="GO:0009611">
    <property type="term" value="P:response to wounding"/>
    <property type="evidence" value="ECO:0000270"/>
    <property type="project" value="TAIR"/>
</dbReference>
<dbReference type="CDD" id="cd02647">
    <property type="entry name" value="nuc_hydro_TvIAG"/>
    <property type="match status" value="2"/>
</dbReference>
<dbReference type="FunFam" id="3.90.245.10:FF:000031">
    <property type="entry name" value="AT5g18860/F17K4_110"/>
    <property type="match status" value="1"/>
</dbReference>
<dbReference type="Gene3D" id="3.90.245.10">
    <property type="entry name" value="Ribonucleoside hydrolase-like"/>
    <property type="match status" value="2"/>
</dbReference>
<dbReference type="InterPro" id="IPR001910">
    <property type="entry name" value="Inosine/uridine_hydrolase_dom"/>
</dbReference>
<dbReference type="InterPro" id="IPR036452">
    <property type="entry name" value="Ribo_hydro-like"/>
</dbReference>
<dbReference type="PANTHER" id="PTHR46692">
    <property type="entry name" value="INOSINE-URIDINE PREFERRING NUCLEOSIDE HYDROLASE FAMILY PROTEIN"/>
    <property type="match status" value="1"/>
</dbReference>
<dbReference type="PANTHER" id="PTHR46692:SF1">
    <property type="entry name" value="NUCLEOSIDE HYDROLASE 3-RELATED"/>
    <property type="match status" value="1"/>
</dbReference>
<dbReference type="Pfam" id="PF01156">
    <property type="entry name" value="IU_nuc_hydro"/>
    <property type="match status" value="2"/>
</dbReference>
<dbReference type="SUPFAM" id="SSF53590">
    <property type="entry name" value="Nucleoside hydrolase"/>
    <property type="match status" value="2"/>
</dbReference>
<feature type="signal peptide" evidence="1">
    <location>
        <begin position="1"/>
        <end position="21"/>
    </location>
</feature>
<feature type="chain" id="PRO_5015099346" description="Nucleoside hydrolase 3">
    <location>
        <begin position="22"/>
        <end position="890"/>
    </location>
</feature>
<feature type="glycosylation site" description="N-linked (GlcNAc...) asparagine" evidence="2">
    <location>
        <position position="55"/>
    </location>
</feature>
<feature type="glycosylation site" description="N-linked (GlcNAc...) asparagine" evidence="2">
    <location>
        <position position="232"/>
    </location>
</feature>
<feature type="glycosylation site" description="N-linked (GlcNAc...) asparagine" evidence="2">
    <location>
        <position position="371"/>
    </location>
</feature>
<feature type="glycosylation site" description="N-linked (GlcNAc...) asparagine" evidence="2">
    <location>
        <position position="485"/>
    </location>
</feature>
<feature type="glycosylation site" description="N-linked (GlcNAc...) asparagine" evidence="2">
    <location>
        <position position="580"/>
    </location>
</feature>
<feature type="glycosylation site" description="N-linked (GlcNAc...) asparagine" evidence="2">
    <location>
        <position position="655"/>
    </location>
</feature>
<feature type="glycosylation site" description="N-linked (GlcNAc...) asparagine" evidence="2">
    <location>
        <position position="740"/>
    </location>
</feature>
<evidence type="ECO:0000255" key="1"/>
<evidence type="ECO:0000255" key="2">
    <source>
        <dbReference type="PROSITE-ProRule" id="PRU00498"/>
    </source>
</evidence>
<evidence type="ECO:0000269" key="3">
    <source>
    </source>
</evidence>
<evidence type="ECO:0000269" key="4">
    <source>
    </source>
</evidence>
<evidence type="ECO:0000303" key="5">
    <source>
    </source>
</evidence>
<evidence type="ECO:0000305" key="6"/>
<evidence type="ECO:0000312" key="7">
    <source>
        <dbReference type="Araport" id="AT5G18860"/>
    </source>
</evidence>
<evidence type="ECO:0000312" key="8">
    <source>
        <dbReference type="EMBL" id="AC068655"/>
    </source>
</evidence>
<proteinExistence type="evidence at protein level"/>
<sequence length="890" mass="99072">MLTSPTLKSLWFLFTILGLLGQNLPCVLSSSHRILVDTDVDTDDLFAILYLLKLNKSEFDLVGITLSANAWTNAGHAVNQVYDLLHMMDRDDIPVGVGGEGGISDDGTIHSDVGGYFPIIEQGMTTTGECRYRQAIPKGLGGLLDIDSNYGFRKQFLPQGNRRYTPLQQPTAQKVIVDKISEGPTTVILLGSHTNFALFLMSNPHLKHNIQHIYIMGGGVRSQNPTGCCPANSTVAECQPRQCGNRGNLFTDYTSNPYSEFNIFADPFAAYQVFHSGVPVTLVPLDATNTIPINQKFFETFENNYQRTYEAQYVFLSLKIARDTWFDDEFYKSYFMWDSFTAGVAVSIMRNSANKNNKNGENDFAEMEYMNITVVTSNKPYGRSDGSNPFFDNRRTPKFNLALGGVHSGHVQTGLRDPTCLPKSGIGRGKCKDGYTQEISGSDSVRVLVATRAKPNINIKSKLDREFYVDFLEVLNRPEETGRFNFSSQFPYYKEELFRPDLSKTRPGKPVVFDMDMSAGDFLSLFYLLKVPVDKIDLKAIIVSPTGWANAATIDVVYDLLHMMGRDDIPVGLGDMLALNQSDPIFPPVGGCKYVKAIPRGCGGFLDSDTLYGLARDLPRSPRRYTAENSVTHGAPRDTDRPELRQPLAIEVWQNLTKSGNGVSKITVLTNGPLTNLAKIISSDKKSSSLIKEVYIVGGHINREKSDKGNIFTIPSNAYAEFNMFLDPLAAKTVLESALNITLVPLATQHKLSSFQTMLDRLYSSTKTPEARFVKRLLVRLQALHQKHRRYTHIDMFLGEVLGAVLLGGDDASLKPKMRAEHIKVIAEGDESRDGKILIDKLRGKQIKILERVDLISISESFASRLDDKKQSAVIGSFEEQKKIWSTPPS</sequence>
<name>NSH3_ARATH</name>
<accession>Q8RY23</accession>
<comment type="function">
    <text evidence="3 4">Extracellular purine-specific hydrolase present in the apoplastic fluid involved in the degradation of extracellular nucleosides, including inosine and adenosine, and which may participate in wound and pathogen responses (e.g. Botrytis cinerea).</text>
</comment>
<comment type="catalytic activity">
    <reaction evidence="3">
        <text>a purine D-ribonucleoside + H2O = a purine nucleobase + D-ribose</text>
        <dbReference type="Rhea" id="RHEA:23344"/>
        <dbReference type="ChEBI" id="CHEBI:15377"/>
        <dbReference type="ChEBI" id="CHEBI:26386"/>
        <dbReference type="ChEBI" id="CHEBI:47013"/>
        <dbReference type="ChEBI" id="CHEBI:142355"/>
        <dbReference type="EC" id="3.2.2.1"/>
    </reaction>
</comment>
<comment type="catalytic activity">
    <reaction evidence="3">
        <text>inosine + H2O = hypoxanthine + D-ribose</text>
        <dbReference type="Rhea" id="RHEA:16657"/>
        <dbReference type="ChEBI" id="CHEBI:15377"/>
        <dbReference type="ChEBI" id="CHEBI:17368"/>
        <dbReference type="ChEBI" id="CHEBI:17596"/>
        <dbReference type="ChEBI" id="CHEBI:47013"/>
        <dbReference type="EC" id="3.2.2.2"/>
    </reaction>
</comment>
<comment type="catalytic activity">
    <reaction evidence="3">
        <text>adenosine + H2O = D-ribose + adenine</text>
        <dbReference type="Rhea" id="RHEA:18669"/>
        <dbReference type="ChEBI" id="CHEBI:15377"/>
        <dbReference type="ChEBI" id="CHEBI:16335"/>
        <dbReference type="ChEBI" id="CHEBI:16708"/>
        <dbReference type="ChEBI" id="CHEBI:47013"/>
        <dbReference type="EC" id="3.2.2.7"/>
    </reaction>
</comment>
<comment type="biophysicochemical properties">
    <kinetics>
        <KM evidence="3">97.2 uM for inosine</KM>
        <KM evidence="3">43.1 uM for adenosine</KM>
    </kinetics>
    <phDependence>
        <text>Optimum pH is 4.8.</text>
    </phDependence>
</comment>
<comment type="subcellular location">
    <subcellularLocation>
        <location evidence="3">Secreted</location>
        <location evidence="3">Extracellular space</location>
        <location evidence="3">Apoplast</location>
    </subcellularLocation>
    <text evidence="3">Present in the apoplastic fluid.</text>
</comment>
<comment type="induction">
    <text evidence="3">By jasmonic acid (JA) and wounding.</text>
</comment>
<comment type="disruption phenotype">
    <text evidence="3 4">Impaired hydrolysis of inosine and adenosine by apoplastic fluid leading to an increased sensitivity to 2-chloroadenosine (PubMed:21235647). The isolated apoplastic sap extracted from the double mutant missing both NSH3 and ENT3 lacks the ability to catalyze the conversion of inosine in hypoxanthine; this double mutant is unable to grow on medium containing inosine as sole nitrogen source, in addition plants are more sensitive to the necrotrophic fungus Botrytis cinerea BMM but are resistant to the cytotoxic adenosine analog 2-chloro-adenosine (CADO) and to 5-fluoro-uridine (PubMed:26779190).</text>
</comment>
<comment type="similarity">
    <text evidence="6">Belongs to the IUNH family.</text>
</comment>
<gene>
    <name evidence="5" type="primary">NSH3</name>
    <name evidence="7" type="ordered locus">At5g18860</name>
    <name evidence="8" type="ORF">F17K4.110</name>
</gene>
<reference key="1">
    <citation type="journal article" date="2000" name="Nature">
        <title>Sequence and analysis of chromosome 5 of the plant Arabidopsis thaliana.</title>
        <authorList>
            <person name="Tabata S."/>
            <person name="Kaneko T."/>
            <person name="Nakamura Y."/>
            <person name="Kotani H."/>
            <person name="Kato T."/>
            <person name="Asamizu E."/>
            <person name="Miyajima N."/>
            <person name="Sasamoto S."/>
            <person name="Kimura T."/>
            <person name="Hosouchi T."/>
            <person name="Kawashima K."/>
            <person name="Kohara M."/>
            <person name="Matsumoto M."/>
            <person name="Matsuno A."/>
            <person name="Muraki A."/>
            <person name="Nakayama S."/>
            <person name="Nakazaki N."/>
            <person name="Naruo K."/>
            <person name="Okumura S."/>
            <person name="Shinpo S."/>
            <person name="Takeuchi C."/>
            <person name="Wada T."/>
            <person name="Watanabe A."/>
            <person name="Yamada M."/>
            <person name="Yasuda M."/>
            <person name="Sato S."/>
            <person name="de la Bastide M."/>
            <person name="Huang E."/>
            <person name="Spiegel L."/>
            <person name="Gnoj L."/>
            <person name="O'Shaughnessy A."/>
            <person name="Preston R."/>
            <person name="Habermann K."/>
            <person name="Murray J."/>
            <person name="Johnson D."/>
            <person name="Rohlfing T."/>
            <person name="Nelson J."/>
            <person name="Stoneking T."/>
            <person name="Pepin K."/>
            <person name="Spieth J."/>
            <person name="Sekhon M."/>
            <person name="Armstrong J."/>
            <person name="Becker M."/>
            <person name="Belter E."/>
            <person name="Cordum H."/>
            <person name="Cordes M."/>
            <person name="Courtney L."/>
            <person name="Courtney W."/>
            <person name="Dante M."/>
            <person name="Du H."/>
            <person name="Edwards J."/>
            <person name="Fryman J."/>
            <person name="Haakensen B."/>
            <person name="Lamar E."/>
            <person name="Latreille P."/>
            <person name="Leonard S."/>
            <person name="Meyer R."/>
            <person name="Mulvaney E."/>
            <person name="Ozersky P."/>
            <person name="Riley A."/>
            <person name="Strowmatt C."/>
            <person name="Wagner-McPherson C."/>
            <person name="Wollam A."/>
            <person name="Yoakum M."/>
            <person name="Bell M."/>
            <person name="Dedhia N."/>
            <person name="Parnell L."/>
            <person name="Shah R."/>
            <person name="Rodriguez M."/>
            <person name="Hoon See L."/>
            <person name="Vil D."/>
            <person name="Baker J."/>
            <person name="Kirchoff K."/>
            <person name="Toth K."/>
            <person name="King L."/>
            <person name="Bahret A."/>
            <person name="Miller B."/>
            <person name="Marra M.A."/>
            <person name="Martienssen R."/>
            <person name="McCombie W.R."/>
            <person name="Wilson R.K."/>
            <person name="Murphy G."/>
            <person name="Bancroft I."/>
            <person name="Volckaert G."/>
            <person name="Wambutt R."/>
            <person name="Duesterhoeft A."/>
            <person name="Stiekema W."/>
            <person name="Pohl T."/>
            <person name="Entian K.-D."/>
            <person name="Terryn N."/>
            <person name="Hartley N."/>
            <person name="Bent E."/>
            <person name="Johnson S."/>
            <person name="Langham S.-A."/>
            <person name="McCullagh B."/>
            <person name="Robben J."/>
            <person name="Grymonprez B."/>
            <person name="Zimmermann W."/>
            <person name="Ramsperger U."/>
            <person name="Wedler H."/>
            <person name="Balke K."/>
            <person name="Wedler E."/>
            <person name="Peters S."/>
            <person name="van Staveren M."/>
            <person name="Dirkse W."/>
            <person name="Mooijman P."/>
            <person name="Klein Lankhorst R."/>
            <person name="Weitzenegger T."/>
            <person name="Bothe G."/>
            <person name="Rose M."/>
            <person name="Hauf J."/>
            <person name="Berneiser S."/>
            <person name="Hempel S."/>
            <person name="Feldpausch M."/>
            <person name="Lamberth S."/>
            <person name="Villarroel R."/>
            <person name="Gielen J."/>
            <person name="Ardiles W."/>
            <person name="Bents O."/>
            <person name="Lemcke K."/>
            <person name="Kolesov G."/>
            <person name="Mayer K.F.X."/>
            <person name="Rudd S."/>
            <person name="Schoof H."/>
            <person name="Schueller C."/>
            <person name="Zaccaria P."/>
            <person name="Mewes H.-W."/>
            <person name="Bevan M."/>
            <person name="Fransz P.F."/>
        </authorList>
    </citation>
    <scope>NUCLEOTIDE SEQUENCE [LARGE SCALE GENOMIC DNA]</scope>
    <source>
        <strain>cv. Columbia</strain>
    </source>
</reference>
<reference key="2">
    <citation type="journal article" date="2017" name="Plant J.">
        <title>Araport11: a complete reannotation of the Arabidopsis thaliana reference genome.</title>
        <authorList>
            <person name="Cheng C.Y."/>
            <person name="Krishnakumar V."/>
            <person name="Chan A.P."/>
            <person name="Thibaud-Nissen F."/>
            <person name="Schobel S."/>
            <person name="Town C.D."/>
        </authorList>
    </citation>
    <scope>GENOME REANNOTATION</scope>
    <source>
        <strain>cv. Columbia</strain>
    </source>
</reference>
<reference key="3">
    <citation type="journal article" date="2003" name="Science">
        <title>Empirical analysis of transcriptional activity in the Arabidopsis genome.</title>
        <authorList>
            <person name="Yamada K."/>
            <person name="Lim J."/>
            <person name="Dale J.M."/>
            <person name="Chen H."/>
            <person name="Shinn P."/>
            <person name="Palm C.J."/>
            <person name="Southwick A.M."/>
            <person name="Wu H.C."/>
            <person name="Kim C.J."/>
            <person name="Nguyen M."/>
            <person name="Pham P.K."/>
            <person name="Cheuk R.F."/>
            <person name="Karlin-Newmann G."/>
            <person name="Liu S.X."/>
            <person name="Lam B."/>
            <person name="Sakano H."/>
            <person name="Wu T."/>
            <person name="Yu G."/>
            <person name="Miranda M."/>
            <person name="Quach H.L."/>
            <person name="Tripp M."/>
            <person name="Chang C.H."/>
            <person name="Lee J.M."/>
            <person name="Toriumi M.J."/>
            <person name="Chan M.M."/>
            <person name="Tang C.C."/>
            <person name="Onodera C.S."/>
            <person name="Deng J.M."/>
            <person name="Akiyama K."/>
            <person name="Ansari Y."/>
            <person name="Arakawa T."/>
            <person name="Banh J."/>
            <person name="Banno F."/>
            <person name="Bowser L."/>
            <person name="Brooks S.Y."/>
            <person name="Carninci P."/>
            <person name="Chao Q."/>
            <person name="Choy N."/>
            <person name="Enju A."/>
            <person name="Goldsmith A.D."/>
            <person name="Gurjal M."/>
            <person name="Hansen N.F."/>
            <person name="Hayashizaki Y."/>
            <person name="Johnson-Hopson C."/>
            <person name="Hsuan V.W."/>
            <person name="Iida K."/>
            <person name="Karnes M."/>
            <person name="Khan S."/>
            <person name="Koesema E."/>
            <person name="Ishida J."/>
            <person name="Jiang P.X."/>
            <person name="Jones T."/>
            <person name="Kawai J."/>
            <person name="Kamiya A."/>
            <person name="Meyers C."/>
            <person name="Nakajima M."/>
            <person name="Narusaka M."/>
            <person name="Seki M."/>
            <person name="Sakurai T."/>
            <person name="Satou M."/>
            <person name="Tamse R."/>
            <person name="Vaysberg M."/>
            <person name="Wallender E.K."/>
            <person name="Wong C."/>
            <person name="Yamamura Y."/>
            <person name="Yuan S."/>
            <person name="Shinozaki K."/>
            <person name="Davis R.W."/>
            <person name="Theologis A."/>
            <person name="Ecker J.R."/>
        </authorList>
    </citation>
    <scope>NUCLEOTIDE SEQUENCE [LARGE SCALE MRNA]</scope>
    <source>
        <strain>cv. Columbia</strain>
    </source>
</reference>
<reference key="4">
    <citation type="journal article" date="2011" name="Plant J.">
        <title>Arabidopsis nucleoside hydrolases involved in intracellular and extracellular degradation of purines.</title>
        <authorList>
            <person name="Jung B."/>
            <person name="Hoffmann C."/>
            <person name="Moehlmann T."/>
        </authorList>
    </citation>
    <scope>FUNCTION</scope>
    <scope>DISRUPTION PHENOTYPE</scope>
    <scope>SUBCELLULAR LOCATION</scope>
    <scope>CATALYTIC ACTIVITY</scope>
    <scope>BIOPHYSICOCHEMICAL PROPERTIES</scope>
    <scope>INDUCTION BY WOUNDING AND JASMONIC ACID</scope>
    <scope>GENE FAMILY</scope>
    <scope>NOMENCLATURE</scope>
    <source>
        <strain>cv. Columbia</strain>
    </source>
</reference>
<reference key="5">
    <citation type="journal article" date="2015" name="Front. Plant Sci.">
        <title>Apoplastic nucleoside accumulation in Arabidopsis leads to reduced photosynthetic performance and increased susceptibility against Botrytis cinerea.</title>
        <authorList>
            <person name="Daumann M."/>
            <person name="Fischer M."/>
            <person name="Niopek-Witz S."/>
            <person name="Girke C."/>
            <person name="Moehlmann T."/>
        </authorList>
    </citation>
    <scope>FUNCTION</scope>
    <scope>DISRUPTION PHENOTYPE</scope>
    <source>
        <strain>cv. Columbia</strain>
    </source>
</reference>